<reference evidence="5" key="1">
    <citation type="journal article" date="2000" name="J. Cell Biol.">
        <title>Asymmetric p38 activation in zebrafish: its possible role in symmetric and synchronous cleavage.</title>
        <authorList>
            <person name="Fujii R."/>
            <person name="Yamashita S."/>
            <person name="Hibi M."/>
            <person name="Hirano T."/>
        </authorList>
    </citation>
    <scope>NUCLEOTIDE SEQUENCE [MRNA]</scope>
    <scope>ACTIVITY REGULATION</scope>
    <scope>PHOSPHORYLATION AT THR-181 AND TYR-183</scope>
    <scope>DEVELOPMENTAL STAGE</scope>
    <scope>MUTAGENESIS OF THR-181 AND TYR-183</scope>
</reference>
<organism evidence="6">
    <name type="scientific">Danio rerio</name>
    <name type="common">Zebrafish</name>
    <name type="synonym">Brachydanio rerio</name>
    <dbReference type="NCBI Taxonomy" id="7955"/>
    <lineage>
        <taxon>Eukaryota</taxon>
        <taxon>Metazoa</taxon>
        <taxon>Chordata</taxon>
        <taxon>Craniata</taxon>
        <taxon>Vertebrata</taxon>
        <taxon>Euteleostomi</taxon>
        <taxon>Actinopterygii</taxon>
        <taxon>Neopterygii</taxon>
        <taxon>Teleostei</taxon>
        <taxon>Ostariophysi</taxon>
        <taxon>Cypriniformes</taxon>
        <taxon>Danionidae</taxon>
        <taxon>Danioninae</taxon>
        <taxon>Danio</taxon>
    </lineage>
</organism>
<sequence>MSQKARPTFYRQELNKTIWEVPERYQNLSPVGSGAYGSVMSAFDGKAGLRVAVKKLSRPFQSIIHAKRTYRELRLLKHMKHENVIGLLDVFSPATSLEGFNDVYLVTHLMGADLNNIVKCQKLTDDHVQFLIYQILRALKYIHSADIIHRDLKPSNLAVNEDCELKILDFGLARLTDDEMTGYVATRWYRAPEIMLNWMHYNMTVDIWSVGCIMAELLTGRTLFPGTDHINQLQQIMRLTGTPPASLISRMPSHEARNYISSLPHMPKRNFADVFIGANPLAVDLLEKMLVLDTDKRITASQALAHPYFAQYHDPDDEPEADPYDQSFESRDLEIEEWKSKIYIQNRN</sequence>
<dbReference type="EC" id="2.7.11.24"/>
<dbReference type="EMBL" id="AB030898">
    <property type="protein sequence ID" value="BAB11808.1"/>
    <property type="molecule type" value="mRNA"/>
</dbReference>
<dbReference type="SMR" id="Q9DGE1"/>
<dbReference type="FunCoup" id="Q9DGE1">
    <property type="interactions" value="1629"/>
</dbReference>
<dbReference type="STRING" id="7955.ENSDARP00000035686"/>
<dbReference type="iPTMnet" id="Q9DGE1"/>
<dbReference type="PaxDb" id="7955-ENSDARP00000035686"/>
<dbReference type="AGR" id="ZFIN:ZDB-GENE-021007-1"/>
<dbReference type="ZFIN" id="ZDB-GENE-021007-1">
    <property type="gene designation" value="mapk14b"/>
</dbReference>
<dbReference type="eggNOG" id="KOG0660">
    <property type="taxonomic scope" value="Eukaryota"/>
</dbReference>
<dbReference type="InParanoid" id="Q9DGE1"/>
<dbReference type="BRENDA" id="2.7.11.24">
    <property type="organism ID" value="928"/>
</dbReference>
<dbReference type="Reactome" id="R-DRE-168638">
    <property type="pathway name" value="NOD1/2 Signaling Pathway"/>
</dbReference>
<dbReference type="Reactome" id="R-DRE-171007">
    <property type="pathway name" value="p38MAPK events"/>
</dbReference>
<dbReference type="Reactome" id="R-DRE-2559580">
    <property type="pathway name" value="Oxidative Stress Induced Senescence"/>
</dbReference>
<dbReference type="Reactome" id="R-DRE-418592">
    <property type="pathway name" value="ADP signalling through P2Y purinoceptor 1"/>
</dbReference>
<dbReference type="Reactome" id="R-DRE-432142">
    <property type="pathway name" value="Platelet sensitization by LDL"/>
</dbReference>
<dbReference type="Reactome" id="R-DRE-4420097">
    <property type="pathway name" value="VEGFA-VEGFR2 Pathway"/>
</dbReference>
<dbReference type="Reactome" id="R-DRE-450302">
    <property type="pathway name" value="activated TAK1 mediates p38 MAPK activation"/>
</dbReference>
<dbReference type="Reactome" id="R-DRE-525793">
    <property type="pathway name" value="Myogenesis"/>
</dbReference>
<dbReference type="Reactome" id="R-DRE-6798695">
    <property type="pathway name" value="Neutrophil degranulation"/>
</dbReference>
<dbReference type="Reactome" id="R-DRE-6804756">
    <property type="pathway name" value="Regulation of TP53 Activity through Phosphorylation"/>
</dbReference>
<dbReference type="Reactome" id="R-DRE-9824585">
    <property type="pathway name" value="Regulation of MITF-M-dependent genes involved in pigmentation"/>
</dbReference>
<dbReference type="PRO" id="PR:Q9DGE1"/>
<dbReference type="Proteomes" id="UP000000437">
    <property type="component" value="Unplaced"/>
</dbReference>
<dbReference type="GO" id="GO:0005737">
    <property type="term" value="C:cytoplasm"/>
    <property type="evidence" value="ECO:0000318"/>
    <property type="project" value="GO_Central"/>
</dbReference>
<dbReference type="GO" id="GO:0005634">
    <property type="term" value="C:nucleus"/>
    <property type="evidence" value="ECO:0000318"/>
    <property type="project" value="GO_Central"/>
</dbReference>
<dbReference type="GO" id="GO:0005524">
    <property type="term" value="F:ATP binding"/>
    <property type="evidence" value="ECO:0007669"/>
    <property type="project" value="UniProtKB-KW"/>
</dbReference>
<dbReference type="GO" id="GO:0004707">
    <property type="term" value="F:MAP kinase activity"/>
    <property type="evidence" value="ECO:0000250"/>
    <property type="project" value="UniProtKB"/>
</dbReference>
<dbReference type="GO" id="GO:0106310">
    <property type="term" value="F:protein serine kinase activity"/>
    <property type="evidence" value="ECO:0007669"/>
    <property type="project" value="RHEA"/>
</dbReference>
<dbReference type="GO" id="GO:0004674">
    <property type="term" value="F:protein serine/threonine kinase activity"/>
    <property type="evidence" value="ECO:0000318"/>
    <property type="project" value="GO_Central"/>
</dbReference>
<dbReference type="GO" id="GO:0034644">
    <property type="term" value="P:cellular response to UV"/>
    <property type="evidence" value="ECO:0000250"/>
    <property type="project" value="UniProtKB"/>
</dbReference>
<dbReference type="GO" id="GO:0035556">
    <property type="term" value="P:intracellular signal transduction"/>
    <property type="evidence" value="ECO:0000250"/>
    <property type="project" value="UniProtKB"/>
</dbReference>
<dbReference type="GO" id="GO:0038066">
    <property type="term" value="P:p38MAPK cascade"/>
    <property type="evidence" value="ECO:0000250"/>
    <property type="project" value="UniProtKB"/>
</dbReference>
<dbReference type="GO" id="GO:0045663">
    <property type="term" value="P:positive regulation of myoblast differentiation"/>
    <property type="evidence" value="ECO:0000250"/>
    <property type="project" value="UniProtKB"/>
</dbReference>
<dbReference type="GO" id="GO:1901741">
    <property type="term" value="P:positive regulation of myoblast fusion"/>
    <property type="evidence" value="ECO:0000250"/>
    <property type="project" value="UniProtKB"/>
</dbReference>
<dbReference type="GO" id="GO:0010831">
    <property type="term" value="P:positive regulation of myotube differentiation"/>
    <property type="evidence" value="ECO:0000250"/>
    <property type="project" value="UniProtKB"/>
</dbReference>
<dbReference type="GO" id="GO:0006357">
    <property type="term" value="P:regulation of transcription by RNA polymerase II"/>
    <property type="evidence" value="ECO:0000250"/>
    <property type="project" value="UniProtKB"/>
</dbReference>
<dbReference type="FunFam" id="1.10.510.10:FF:000063">
    <property type="entry name" value="Mitogen-activated protein kinase 14"/>
    <property type="match status" value="1"/>
</dbReference>
<dbReference type="FunFam" id="3.30.200.20:FF:000769">
    <property type="entry name" value="Mitogen-activated protein kinase 14"/>
    <property type="match status" value="1"/>
</dbReference>
<dbReference type="Gene3D" id="3.30.200.20">
    <property type="entry name" value="Phosphorylase Kinase, domain 1"/>
    <property type="match status" value="1"/>
</dbReference>
<dbReference type="Gene3D" id="1.10.510.10">
    <property type="entry name" value="Transferase(Phosphotransferase) domain 1"/>
    <property type="match status" value="1"/>
</dbReference>
<dbReference type="InterPro" id="IPR011009">
    <property type="entry name" value="Kinase-like_dom_sf"/>
</dbReference>
<dbReference type="InterPro" id="IPR050117">
    <property type="entry name" value="MAP_kinase"/>
</dbReference>
<dbReference type="InterPro" id="IPR003527">
    <property type="entry name" value="MAP_kinase_CS"/>
</dbReference>
<dbReference type="InterPro" id="IPR008352">
    <property type="entry name" value="MAPK_p38-like"/>
</dbReference>
<dbReference type="InterPro" id="IPR000719">
    <property type="entry name" value="Prot_kinase_dom"/>
</dbReference>
<dbReference type="InterPro" id="IPR017441">
    <property type="entry name" value="Protein_kinase_ATP_BS"/>
</dbReference>
<dbReference type="PANTHER" id="PTHR24055">
    <property type="entry name" value="MITOGEN-ACTIVATED PROTEIN KINASE"/>
    <property type="match status" value="1"/>
</dbReference>
<dbReference type="Pfam" id="PF00069">
    <property type="entry name" value="Pkinase"/>
    <property type="match status" value="1"/>
</dbReference>
<dbReference type="PRINTS" id="PR01773">
    <property type="entry name" value="P38MAPKINASE"/>
</dbReference>
<dbReference type="SMART" id="SM00220">
    <property type="entry name" value="S_TKc"/>
    <property type="match status" value="1"/>
</dbReference>
<dbReference type="SUPFAM" id="SSF56112">
    <property type="entry name" value="Protein kinase-like (PK-like)"/>
    <property type="match status" value="1"/>
</dbReference>
<dbReference type="PROSITE" id="PS01351">
    <property type="entry name" value="MAPK"/>
    <property type="match status" value="1"/>
</dbReference>
<dbReference type="PROSITE" id="PS00107">
    <property type="entry name" value="PROTEIN_KINASE_ATP"/>
    <property type="match status" value="1"/>
</dbReference>
<dbReference type="PROSITE" id="PS50011">
    <property type="entry name" value="PROTEIN_KINASE_DOM"/>
    <property type="match status" value="1"/>
</dbReference>
<feature type="chain" id="PRO_0000186297" description="Mitogen-activated protein kinase 14B">
    <location>
        <begin position="1"/>
        <end position="348"/>
    </location>
</feature>
<feature type="domain" description="Protein kinase" evidence="3">
    <location>
        <begin position="25"/>
        <end position="309"/>
    </location>
</feature>
<feature type="short sequence motif" description="TXY">
    <location>
        <begin position="181"/>
        <end position="183"/>
    </location>
</feature>
<feature type="active site" description="Proton acceptor" evidence="3">
    <location>
        <position position="169"/>
    </location>
</feature>
<feature type="binding site" evidence="3">
    <location>
        <begin position="31"/>
        <end position="39"/>
    </location>
    <ligand>
        <name>ATP</name>
        <dbReference type="ChEBI" id="CHEBI:30616"/>
    </ligand>
</feature>
<feature type="binding site" evidence="3">
    <location>
        <position position="54"/>
    </location>
    <ligand>
        <name>ATP</name>
        <dbReference type="ChEBI" id="CHEBI:30616"/>
    </ligand>
</feature>
<feature type="modified residue" description="Phosphothreonine; by MAP2K3" evidence="4">
    <location>
        <position position="181"/>
    </location>
</feature>
<feature type="modified residue" description="Phosphotyrosine; by MAP2K3" evidence="4">
    <location>
        <position position="183"/>
    </location>
</feature>
<feature type="mutagenesis site" description="Loss of enzyme activation." evidence="4">
    <original>T</original>
    <variation>A</variation>
    <location>
        <position position="181"/>
    </location>
</feature>
<feature type="mutagenesis site" description="Loss of enzyme activation." evidence="4">
    <original>Y</original>
    <variation>F</variation>
    <location>
        <position position="183"/>
    </location>
</feature>
<keyword id="KW-0067">ATP-binding</keyword>
<keyword id="KW-0963">Cytoplasm</keyword>
<keyword id="KW-0418">Kinase</keyword>
<keyword id="KW-0547">Nucleotide-binding</keyword>
<keyword id="KW-0539">Nucleus</keyword>
<keyword id="KW-0597">Phosphoprotein</keyword>
<keyword id="KW-1185">Reference proteome</keyword>
<keyword id="KW-0723">Serine/threonine-protein kinase</keyword>
<keyword id="KW-0346">Stress response</keyword>
<keyword id="KW-0804">Transcription</keyword>
<keyword id="KW-0805">Transcription regulation</keyword>
<keyword id="KW-0808">Transferase</keyword>
<comment type="function">
    <text evidence="1">Serine/threonine kinase which acts as an essential component of the MAP kinase signal transduction pathway. Mapk14b is one of the four p38 MAPKs which play an important role in the cascades of cellular responses evoked by extracellular stimuli such as pro-inflammatory cytokines or physical stress leading to direct activation of transcription factors. Accordingly, p38 MAPKs phosphorylate a broad range of proteins and it has been estimated that they may have approximately 200 to 300 substrates each. Some of the targets are downstream kinases which are activated through phosphorylation and further phosphorylate additional targets (By similarity).</text>
</comment>
<comment type="catalytic activity">
    <reaction evidence="2">
        <text>L-seryl-[protein] + ATP = O-phospho-L-seryl-[protein] + ADP + H(+)</text>
        <dbReference type="Rhea" id="RHEA:17989"/>
        <dbReference type="Rhea" id="RHEA-COMP:9863"/>
        <dbReference type="Rhea" id="RHEA-COMP:11604"/>
        <dbReference type="ChEBI" id="CHEBI:15378"/>
        <dbReference type="ChEBI" id="CHEBI:29999"/>
        <dbReference type="ChEBI" id="CHEBI:30616"/>
        <dbReference type="ChEBI" id="CHEBI:83421"/>
        <dbReference type="ChEBI" id="CHEBI:456216"/>
        <dbReference type="EC" id="2.7.11.24"/>
    </reaction>
</comment>
<comment type="catalytic activity">
    <reaction evidence="2">
        <text>L-threonyl-[protein] + ATP = O-phospho-L-threonyl-[protein] + ADP + H(+)</text>
        <dbReference type="Rhea" id="RHEA:46608"/>
        <dbReference type="Rhea" id="RHEA-COMP:11060"/>
        <dbReference type="Rhea" id="RHEA-COMP:11605"/>
        <dbReference type="ChEBI" id="CHEBI:15378"/>
        <dbReference type="ChEBI" id="CHEBI:30013"/>
        <dbReference type="ChEBI" id="CHEBI:30616"/>
        <dbReference type="ChEBI" id="CHEBI:61977"/>
        <dbReference type="ChEBI" id="CHEBI:456216"/>
        <dbReference type="EC" id="2.7.11.24"/>
    </reaction>
</comment>
<comment type="cofactor">
    <cofactor evidence="2">
        <name>Mg(2+)</name>
        <dbReference type="ChEBI" id="CHEBI:18420"/>
    </cofactor>
</comment>
<comment type="activity regulation">
    <text evidence="4">Activated by threonine and tyrosine phosphorylation by the dual specificity kinase, MKK3.</text>
</comment>
<comment type="subcellular location">
    <subcellularLocation>
        <location evidence="1">Cytoplasm</location>
    </subcellularLocation>
    <subcellularLocation>
        <location evidence="1">Nucleus</location>
    </subcellularLocation>
</comment>
<comment type="developmental stage">
    <text evidence="4">Expressed at very low levels throughout development.</text>
</comment>
<comment type="domain">
    <text>The TXY motif contains the threonine and tyrosine residues whose phosphorylation activates the MAP kinases.</text>
</comment>
<comment type="PTM">
    <text evidence="4">Dually phosphorylated on Thr-181 and Tyr-183, which activates the enzyme.</text>
</comment>
<comment type="similarity">
    <text evidence="5">Belongs to the protein kinase superfamily. CMGC Ser/Thr protein kinase family. MAP kinase subfamily.</text>
</comment>
<protein>
    <recommendedName>
        <fullName>Mitogen-activated protein kinase 14B</fullName>
        <shortName>MAP kinase 14B</shortName>
        <shortName>MAPK 14B</shortName>
        <ecNumber>2.7.11.24</ecNumber>
    </recommendedName>
    <alternativeName>
        <fullName>Mitogen-activated protein kinase p38b</fullName>
        <shortName>MAP kinase p38b</shortName>
        <shortName>zp38b</shortName>
    </alternativeName>
</protein>
<accession>Q9DGE1</accession>
<proteinExistence type="evidence at protein level"/>
<name>MK14B_DANRE</name>
<evidence type="ECO:0000250" key="1"/>
<evidence type="ECO:0000250" key="2">
    <source>
        <dbReference type="UniProtKB" id="Q90336"/>
    </source>
</evidence>
<evidence type="ECO:0000255" key="3">
    <source>
        <dbReference type="PROSITE-ProRule" id="PRU00159"/>
    </source>
</evidence>
<evidence type="ECO:0000269" key="4">
    <source>
    </source>
</evidence>
<evidence type="ECO:0000305" key="5"/>
<evidence type="ECO:0000312" key="6">
    <source>
        <dbReference type="EMBL" id="BAB11808.1"/>
    </source>
</evidence>
<gene>
    <name type="primary">mapk14b</name>
    <name type="synonym">mapk14</name>
</gene>